<evidence type="ECO:0000250" key="1"/>
<evidence type="ECO:0000255" key="2"/>
<evidence type="ECO:0000256" key="3">
    <source>
        <dbReference type="SAM" id="MobiDB-lite"/>
    </source>
</evidence>
<evidence type="ECO:0000269" key="4">
    <source>
    </source>
</evidence>
<evidence type="ECO:0000269" key="5">
    <source>
    </source>
</evidence>
<evidence type="ECO:0000305" key="6"/>
<reference key="1">
    <citation type="journal article" date="1997" name="DNA Res.">
        <title>Structural analysis of Arabidopsis thaliana chromosome 5. III. Sequence features of the regions of 1,191,918 bp covered by seventeen physically assigned P1 clones.</title>
        <authorList>
            <person name="Nakamura Y."/>
            <person name="Sato S."/>
            <person name="Kaneko T."/>
            <person name="Kotani H."/>
            <person name="Asamizu E."/>
            <person name="Miyajima N."/>
            <person name="Tabata S."/>
        </authorList>
    </citation>
    <scope>NUCLEOTIDE SEQUENCE [LARGE SCALE GENOMIC DNA]</scope>
    <source>
        <strain>cv. Columbia</strain>
    </source>
</reference>
<reference key="2">
    <citation type="journal article" date="2000" name="Nature">
        <title>Sequence and analysis of chromosome 5 of the plant Arabidopsis thaliana.</title>
        <authorList>
            <person name="Tabata S."/>
            <person name="Kaneko T."/>
            <person name="Nakamura Y."/>
            <person name="Kotani H."/>
            <person name="Kato T."/>
            <person name="Asamizu E."/>
            <person name="Miyajima N."/>
            <person name="Sasamoto S."/>
            <person name="Kimura T."/>
            <person name="Hosouchi T."/>
            <person name="Kawashima K."/>
            <person name="Kohara M."/>
            <person name="Matsumoto M."/>
            <person name="Matsuno A."/>
            <person name="Muraki A."/>
            <person name="Nakayama S."/>
            <person name="Nakazaki N."/>
            <person name="Naruo K."/>
            <person name="Okumura S."/>
            <person name="Shinpo S."/>
            <person name="Takeuchi C."/>
            <person name="Wada T."/>
            <person name="Watanabe A."/>
            <person name="Yamada M."/>
            <person name="Yasuda M."/>
            <person name="Sato S."/>
            <person name="de la Bastide M."/>
            <person name="Huang E."/>
            <person name="Spiegel L."/>
            <person name="Gnoj L."/>
            <person name="O'Shaughnessy A."/>
            <person name="Preston R."/>
            <person name="Habermann K."/>
            <person name="Murray J."/>
            <person name="Johnson D."/>
            <person name="Rohlfing T."/>
            <person name="Nelson J."/>
            <person name="Stoneking T."/>
            <person name="Pepin K."/>
            <person name="Spieth J."/>
            <person name="Sekhon M."/>
            <person name="Armstrong J."/>
            <person name="Becker M."/>
            <person name="Belter E."/>
            <person name="Cordum H."/>
            <person name="Cordes M."/>
            <person name="Courtney L."/>
            <person name="Courtney W."/>
            <person name="Dante M."/>
            <person name="Du H."/>
            <person name="Edwards J."/>
            <person name="Fryman J."/>
            <person name="Haakensen B."/>
            <person name="Lamar E."/>
            <person name="Latreille P."/>
            <person name="Leonard S."/>
            <person name="Meyer R."/>
            <person name="Mulvaney E."/>
            <person name="Ozersky P."/>
            <person name="Riley A."/>
            <person name="Strowmatt C."/>
            <person name="Wagner-McPherson C."/>
            <person name="Wollam A."/>
            <person name="Yoakum M."/>
            <person name="Bell M."/>
            <person name="Dedhia N."/>
            <person name="Parnell L."/>
            <person name="Shah R."/>
            <person name="Rodriguez M."/>
            <person name="Hoon See L."/>
            <person name="Vil D."/>
            <person name="Baker J."/>
            <person name="Kirchoff K."/>
            <person name="Toth K."/>
            <person name="King L."/>
            <person name="Bahret A."/>
            <person name="Miller B."/>
            <person name="Marra M.A."/>
            <person name="Martienssen R."/>
            <person name="McCombie W.R."/>
            <person name="Wilson R.K."/>
            <person name="Murphy G."/>
            <person name="Bancroft I."/>
            <person name="Volckaert G."/>
            <person name="Wambutt R."/>
            <person name="Duesterhoeft A."/>
            <person name="Stiekema W."/>
            <person name="Pohl T."/>
            <person name="Entian K.-D."/>
            <person name="Terryn N."/>
            <person name="Hartley N."/>
            <person name="Bent E."/>
            <person name="Johnson S."/>
            <person name="Langham S.-A."/>
            <person name="McCullagh B."/>
            <person name="Robben J."/>
            <person name="Grymonprez B."/>
            <person name="Zimmermann W."/>
            <person name="Ramsperger U."/>
            <person name="Wedler H."/>
            <person name="Balke K."/>
            <person name="Wedler E."/>
            <person name="Peters S."/>
            <person name="van Staveren M."/>
            <person name="Dirkse W."/>
            <person name="Mooijman P."/>
            <person name="Klein Lankhorst R."/>
            <person name="Weitzenegger T."/>
            <person name="Bothe G."/>
            <person name="Rose M."/>
            <person name="Hauf J."/>
            <person name="Berneiser S."/>
            <person name="Hempel S."/>
            <person name="Feldpausch M."/>
            <person name="Lamberth S."/>
            <person name="Villarroel R."/>
            <person name="Gielen J."/>
            <person name="Ardiles W."/>
            <person name="Bents O."/>
            <person name="Lemcke K."/>
            <person name="Kolesov G."/>
            <person name="Mayer K.F.X."/>
            <person name="Rudd S."/>
            <person name="Schoof H."/>
            <person name="Schueller C."/>
            <person name="Zaccaria P."/>
            <person name="Mewes H.-W."/>
            <person name="Bevan M."/>
            <person name="Fransz P.F."/>
        </authorList>
    </citation>
    <scope>NUCLEOTIDE SEQUENCE [LARGE SCALE GENOMIC DNA]</scope>
    <source>
        <strain>cv. Columbia</strain>
    </source>
</reference>
<reference key="3">
    <citation type="journal article" date="2017" name="Plant J.">
        <title>Araport11: a complete reannotation of the Arabidopsis thaliana reference genome.</title>
        <authorList>
            <person name="Cheng C.Y."/>
            <person name="Krishnakumar V."/>
            <person name="Chan A.P."/>
            <person name="Thibaud-Nissen F."/>
            <person name="Schobel S."/>
            <person name="Town C.D."/>
        </authorList>
    </citation>
    <scope>GENOME REANNOTATION</scope>
    <source>
        <strain>cv. Columbia</strain>
    </source>
</reference>
<reference key="4">
    <citation type="journal article" date="2003" name="Science">
        <title>Empirical analysis of transcriptional activity in the Arabidopsis genome.</title>
        <authorList>
            <person name="Yamada K."/>
            <person name="Lim J."/>
            <person name="Dale J.M."/>
            <person name="Chen H."/>
            <person name="Shinn P."/>
            <person name="Palm C.J."/>
            <person name="Southwick A.M."/>
            <person name="Wu H.C."/>
            <person name="Kim C.J."/>
            <person name="Nguyen M."/>
            <person name="Pham P.K."/>
            <person name="Cheuk R.F."/>
            <person name="Karlin-Newmann G."/>
            <person name="Liu S.X."/>
            <person name="Lam B."/>
            <person name="Sakano H."/>
            <person name="Wu T."/>
            <person name="Yu G."/>
            <person name="Miranda M."/>
            <person name="Quach H.L."/>
            <person name="Tripp M."/>
            <person name="Chang C.H."/>
            <person name="Lee J.M."/>
            <person name="Toriumi M.J."/>
            <person name="Chan M.M."/>
            <person name="Tang C.C."/>
            <person name="Onodera C.S."/>
            <person name="Deng J.M."/>
            <person name="Akiyama K."/>
            <person name="Ansari Y."/>
            <person name="Arakawa T."/>
            <person name="Banh J."/>
            <person name="Banno F."/>
            <person name="Bowser L."/>
            <person name="Brooks S.Y."/>
            <person name="Carninci P."/>
            <person name="Chao Q."/>
            <person name="Choy N."/>
            <person name="Enju A."/>
            <person name="Goldsmith A.D."/>
            <person name="Gurjal M."/>
            <person name="Hansen N.F."/>
            <person name="Hayashizaki Y."/>
            <person name="Johnson-Hopson C."/>
            <person name="Hsuan V.W."/>
            <person name="Iida K."/>
            <person name="Karnes M."/>
            <person name="Khan S."/>
            <person name="Koesema E."/>
            <person name="Ishida J."/>
            <person name="Jiang P.X."/>
            <person name="Jones T."/>
            <person name="Kawai J."/>
            <person name="Kamiya A."/>
            <person name="Meyers C."/>
            <person name="Nakajima M."/>
            <person name="Narusaka M."/>
            <person name="Seki M."/>
            <person name="Sakurai T."/>
            <person name="Satou M."/>
            <person name="Tamse R."/>
            <person name="Vaysberg M."/>
            <person name="Wallender E.K."/>
            <person name="Wong C."/>
            <person name="Yamamura Y."/>
            <person name="Yuan S."/>
            <person name="Shinozaki K."/>
            <person name="Davis R.W."/>
            <person name="Theologis A."/>
            <person name="Ecker J.R."/>
        </authorList>
    </citation>
    <scope>NUCLEOTIDE SEQUENCE [LARGE SCALE MRNA] (ISOFORM 1)</scope>
    <source>
        <strain>cv. Columbia</strain>
    </source>
</reference>
<reference key="5">
    <citation type="journal article" date="2005" name="Development">
        <title>Genetic and molecular identification of genes required for female gametophyte development and function in Arabidopsis.</title>
        <authorList>
            <person name="Pagnussat G.C."/>
            <person name="Yu H.-J."/>
            <person name="Ngo Q.A."/>
            <person name="Rajani S."/>
            <person name="Mayalagu S."/>
            <person name="Johnson C.S."/>
            <person name="Capron A."/>
            <person name="Xie L.-F."/>
            <person name="Ye D."/>
            <person name="Sundaresan V."/>
        </authorList>
    </citation>
    <scope>DISRUPTION PHENOTYPE</scope>
</reference>
<reference key="6">
    <citation type="journal article" date="2008" name="PLoS ONE">
        <title>Sorting signals, N-terminal modifications and abundance of the chloroplast proteome.</title>
        <authorList>
            <person name="Zybailov B."/>
            <person name="Rutschow H."/>
            <person name="Friso G."/>
            <person name="Rudella A."/>
            <person name="Emanuelsson O."/>
            <person name="Sun Q."/>
            <person name="van Wijk K.J."/>
        </authorList>
    </citation>
    <scope>IDENTIFICATION BY MASS SPECTROMETRY</scope>
    <scope>SUBCELLULAR LOCATION [LARGE SCALE ANALYSIS]</scope>
</reference>
<reference key="7">
    <citation type="journal article" date="2011" name="Plant Physiol.">
        <title>Defining the protein complex proteome of plant mitochondria.</title>
        <authorList>
            <person name="Klodmann J."/>
            <person name="Senkler M."/>
            <person name="Rode C."/>
            <person name="Braun H.-P."/>
        </authorList>
    </citation>
    <scope>IDENTIFICATION BY MASS SPECTROMETRY</scope>
    <scope>SUBCELLULAR LOCATION [LARGE SCALE ANALYSIS]</scope>
</reference>
<reference key="8">
    <citation type="journal article" date="2012" name="Mol. Cell. Proteomics">
        <title>Comparative large-scale characterisation of plant vs. mammal proteins reveals similar and idiosyncratic N-alpha acetylation features.</title>
        <authorList>
            <person name="Bienvenut W.V."/>
            <person name="Sumpton D."/>
            <person name="Martinez A."/>
            <person name="Lilla S."/>
            <person name="Espagne C."/>
            <person name="Meinnel T."/>
            <person name="Giglione C."/>
        </authorList>
    </citation>
    <scope>IDENTIFICATION BY MASS SPECTROMETRY [LARGE SCALE ANALYSIS]</scope>
</reference>
<proteinExistence type="evidence at protein level"/>
<keyword id="KW-0025">Alternative splicing</keyword>
<keyword id="KW-0149">Chlorophyll biosynthesis</keyword>
<keyword id="KW-0150">Chloroplast</keyword>
<keyword id="KW-0274">FAD</keyword>
<keyword id="KW-0285">Flavoprotein</keyword>
<keyword id="KW-0350">Heme biosynthesis</keyword>
<keyword id="KW-0496">Mitochondrion</keyword>
<keyword id="KW-0560">Oxidoreductase</keyword>
<keyword id="KW-0934">Plastid</keyword>
<keyword id="KW-0627">Porphyrin biosynthesis</keyword>
<keyword id="KW-1185">Reference proteome</keyword>
<keyword id="KW-0809">Transit peptide</keyword>
<name>PPOCM_ARATH</name>
<accession>Q8S9J1</accession>
<accession>F4K5H8</accession>
<accession>Q9FMS9</accession>
<accession>Q9LYA7</accession>
<dbReference type="EC" id="1.3.3.4"/>
<dbReference type="EMBL" id="AB007650">
    <property type="protein sequence ID" value="BAB08301.1"/>
    <property type="status" value="ALT_SEQ"/>
    <property type="molecule type" value="Genomic_DNA"/>
</dbReference>
<dbReference type="EMBL" id="AL163817">
    <property type="protein sequence ID" value="CAB87761.1"/>
    <property type="status" value="ALT_SEQ"/>
    <property type="molecule type" value="Genomic_DNA"/>
</dbReference>
<dbReference type="EMBL" id="CP002688">
    <property type="protein sequence ID" value="AED92001.1"/>
    <property type="molecule type" value="Genomic_DNA"/>
</dbReference>
<dbReference type="EMBL" id="CP002688">
    <property type="protein sequence ID" value="AED92002.1"/>
    <property type="molecule type" value="Genomic_DNA"/>
</dbReference>
<dbReference type="EMBL" id="AY075665">
    <property type="protein sequence ID" value="AAL77672.1"/>
    <property type="molecule type" value="mRNA"/>
</dbReference>
<dbReference type="EMBL" id="AY101523">
    <property type="protein sequence ID" value="AAM26644.1"/>
    <property type="molecule type" value="mRNA"/>
</dbReference>
<dbReference type="PIR" id="T48595">
    <property type="entry name" value="T48595"/>
</dbReference>
<dbReference type="RefSeq" id="NP_001190307.1">
    <molecule id="Q8S9J1-2"/>
    <property type="nucleotide sequence ID" value="NM_001203378.1"/>
</dbReference>
<dbReference type="RefSeq" id="NP_196926.2">
    <molecule id="Q8S9J1-1"/>
    <property type="nucleotide sequence ID" value="NM_121426.5"/>
</dbReference>
<dbReference type="SMR" id="Q8S9J1"/>
<dbReference type="FunCoup" id="Q8S9J1">
    <property type="interactions" value="2205"/>
</dbReference>
<dbReference type="STRING" id="3702.Q8S9J1"/>
<dbReference type="iPTMnet" id="Q8S9J1"/>
<dbReference type="PaxDb" id="3702-AT5G14220.1"/>
<dbReference type="ProMEX" id="Q8S9J1"/>
<dbReference type="ProteomicsDB" id="234866">
    <molecule id="Q8S9J1-1"/>
</dbReference>
<dbReference type="DNASU" id="831272"/>
<dbReference type="EnsemblPlants" id="AT5G14220.1">
    <molecule id="Q8S9J1-1"/>
    <property type="protein sequence ID" value="AT5G14220.1"/>
    <property type="gene ID" value="AT5G14220"/>
</dbReference>
<dbReference type="EnsemblPlants" id="AT5G14220.2">
    <molecule id="Q8S9J1-2"/>
    <property type="protein sequence ID" value="AT5G14220.2"/>
    <property type="gene ID" value="AT5G14220"/>
</dbReference>
<dbReference type="GeneID" id="831272"/>
<dbReference type="Gramene" id="AT5G14220.1">
    <molecule id="Q8S9J1-1"/>
    <property type="protein sequence ID" value="AT5G14220.1"/>
    <property type="gene ID" value="AT5G14220"/>
</dbReference>
<dbReference type="Gramene" id="AT5G14220.2">
    <molecule id="Q8S9J1-2"/>
    <property type="protein sequence ID" value="AT5G14220.2"/>
    <property type="gene ID" value="AT5G14220"/>
</dbReference>
<dbReference type="KEGG" id="ath:AT5G14220"/>
<dbReference type="Araport" id="AT5G14220"/>
<dbReference type="TAIR" id="AT5G14220">
    <property type="gene designation" value="HEMG2"/>
</dbReference>
<dbReference type="eggNOG" id="KOG1276">
    <property type="taxonomic scope" value="Eukaryota"/>
</dbReference>
<dbReference type="InParanoid" id="Q8S9J1"/>
<dbReference type="PhylomeDB" id="Q8S9J1"/>
<dbReference type="UniPathway" id="UPA00251">
    <property type="reaction ID" value="UER00324"/>
</dbReference>
<dbReference type="UniPathway" id="UPA00668"/>
<dbReference type="PRO" id="PR:Q8S9J1"/>
<dbReference type="Proteomes" id="UP000006548">
    <property type="component" value="Chromosome 5"/>
</dbReference>
<dbReference type="ExpressionAtlas" id="Q8S9J1">
    <property type="expression patterns" value="baseline and differential"/>
</dbReference>
<dbReference type="GO" id="GO:0009507">
    <property type="term" value="C:chloroplast"/>
    <property type="evidence" value="ECO:0007005"/>
    <property type="project" value="TAIR"/>
</dbReference>
<dbReference type="GO" id="GO:0009941">
    <property type="term" value="C:chloroplast envelope"/>
    <property type="evidence" value="ECO:0007005"/>
    <property type="project" value="TAIR"/>
</dbReference>
<dbReference type="GO" id="GO:0005739">
    <property type="term" value="C:mitochondrion"/>
    <property type="evidence" value="ECO:0007669"/>
    <property type="project" value="UniProtKB-SubCell"/>
</dbReference>
<dbReference type="GO" id="GO:0009536">
    <property type="term" value="C:plastid"/>
    <property type="evidence" value="ECO:0007005"/>
    <property type="project" value="TAIR"/>
</dbReference>
<dbReference type="GO" id="GO:0004729">
    <property type="term" value="F:oxygen-dependent protoporphyrinogen oxidase activity"/>
    <property type="evidence" value="ECO:0007669"/>
    <property type="project" value="UniProtKB-EC"/>
</dbReference>
<dbReference type="GO" id="GO:0015995">
    <property type="term" value="P:chlorophyll biosynthetic process"/>
    <property type="evidence" value="ECO:0007669"/>
    <property type="project" value="UniProtKB-UniPathway"/>
</dbReference>
<dbReference type="GO" id="GO:0009793">
    <property type="term" value="P:embryo development ending in seed dormancy"/>
    <property type="evidence" value="ECO:0000315"/>
    <property type="project" value="TAIR"/>
</dbReference>
<dbReference type="GO" id="GO:0006782">
    <property type="term" value="P:protoporphyrinogen IX biosynthetic process"/>
    <property type="evidence" value="ECO:0007669"/>
    <property type="project" value="UniProtKB-UniPathway"/>
</dbReference>
<dbReference type="FunFam" id="1.10.3110.10:FF:000003">
    <property type="entry name" value="Protoporphyrinogen oxidase"/>
    <property type="match status" value="1"/>
</dbReference>
<dbReference type="Gene3D" id="3.50.50.60">
    <property type="entry name" value="FAD/NAD(P)-binding domain"/>
    <property type="match status" value="1"/>
</dbReference>
<dbReference type="Gene3D" id="1.10.3110.10">
    <property type="entry name" value="protoporphyrinogen ix oxidase, domain 3"/>
    <property type="match status" value="1"/>
</dbReference>
<dbReference type="Gene3D" id="3.90.660.20">
    <property type="entry name" value="Protoporphyrinogen oxidase, mitochondrial, domain 2"/>
    <property type="match status" value="1"/>
</dbReference>
<dbReference type="InterPro" id="IPR002937">
    <property type="entry name" value="Amino_oxidase"/>
</dbReference>
<dbReference type="InterPro" id="IPR036188">
    <property type="entry name" value="FAD/NAD-bd_sf"/>
</dbReference>
<dbReference type="InterPro" id="IPR004572">
    <property type="entry name" value="Protoporphyrinogen_oxidase"/>
</dbReference>
<dbReference type="InterPro" id="IPR050464">
    <property type="entry name" value="Zeta_carotene_desat/Oxidored"/>
</dbReference>
<dbReference type="NCBIfam" id="TIGR00562">
    <property type="entry name" value="proto_IX_ox"/>
    <property type="match status" value="1"/>
</dbReference>
<dbReference type="PANTHER" id="PTHR42923">
    <property type="entry name" value="PROTOPORPHYRINOGEN OXIDASE"/>
    <property type="match status" value="1"/>
</dbReference>
<dbReference type="PANTHER" id="PTHR42923:SF44">
    <property type="entry name" value="PROTOPORPHYRINOGEN OXIDASE 2, CHLOROPLASTIC_MITOCHONDRIAL"/>
    <property type="match status" value="1"/>
</dbReference>
<dbReference type="Pfam" id="PF01593">
    <property type="entry name" value="Amino_oxidase"/>
    <property type="match status" value="1"/>
</dbReference>
<dbReference type="PRINTS" id="PR00419">
    <property type="entry name" value="ADXRDTASE"/>
</dbReference>
<dbReference type="SUPFAM" id="SSF54373">
    <property type="entry name" value="FAD-linked reductases, C-terminal domain"/>
    <property type="match status" value="1"/>
</dbReference>
<dbReference type="SUPFAM" id="SSF51905">
    <property type="entry name" value="FAD/NAD(P)-binding domain"/>
    <property type="match status" value="1"/>
</dbReference>
<gene>
    <name type="primary">PPOX2</name>
    <name type="synonym">HEMG2</name>
    <name type="synonym">MEE61</name>
    <name type="synonym">PPO2</name>
    <name type="ordered locus">At5g14220</name>
    <name type="ORF">F18O22.10</name>
    <name type="ORF">MUA22.22</name>
</gene>
<protein>
    <recommendedName>
        <fullName>Protoporphyrinogen oxidase 2, chloroplastic/mitochondrial</fullName>
        <shortName>PPO2</shortName>
        <ecNumber>1.3.3.4</ecNumber>
    </recommendedName>
    <alternativeName>
        <fullName>Protein MATERNAL EFFECT EMBRYO ARREST 61</fullName>
    </alternativeName>
</protein>
<feature type="transit peptide" description="Chloroplast and mitochondrion" evidence="2">
    <location>
        <begin position="1"/>
        <end position="22"/>
    </location>
</feature>
<feature type="chain" id="PRO_0000422669" description="Protoporphyrinogen oxidase 2, chloroplastic/mitochondrial">
    <location>
        <begin position="23"/>
        <end position="508"/>
    </location>
</feature>
<feature type="region of interest" description="Disordered" evidence="3">
    <location>
        <begin position="219"/>
        <end position="239"/>
    </location>
</feature>
<feature type="binding site" evidence="1">
    <location>
        <begin position="23"/>
        <end position="28"/>
    </location>
    <ligand>
        <name>FAD</name>
        <dbReference type="ChEBI" id="CHEBI:57692"/>
    </ligand>
</feature>
<feature type="binding site" evidence="1">
    <location>
        <begin position="46"/>
        <end position="47"/>
    </location>
    <ligand>
        <name>FAD</name>
        <dbReference type="ChEBI" id="CHEBI:57692"/>
    </ligand>
</feature>
<feature type="binding site" evidence="1">
    <location>
        <begin position="68"/>
        <end position="71"/>
    </location>
    <ligand>
        <name>FAD</name>
        <dbReference type="ChEBI" id="CHEBI:57692"/>
    </ligand>
</feature>
<feature type="binding site" evidence="1">
    <location>
        <position position="268"/>
    </location>
    <ligand>
        <name>FAD</name>
        <dbReference type="ChEBI" id="CHEBI:57692"/>
    </ligand>
</feature>
<feature type="binding site" evidence="1">
    <location>
        <begin position="475"/>
        <end position="477"/>
    </location>
    <ligand>
        <name>FAD</name>
        <dbReference type="ChEBI" id="CHEBI:57692"/>
    </ligand>
</feature>
<feature type="splice variant" id="VSP_046550" description="In isoform 2." evidence="6">
    <location>
        <begin position="112"/>
        <end position="141"/>
    </location>
</feature>
<sequence length="508" mass="55630">MASGAVADHQIEAVSGKRVAVVGAGVSGLAAAYKLKSRGLNVTVFEADGRVGGKLRSVMQNGLIWDEGANTMTEAEPEVGSLLDDLGLREKQQFPISQKKRYIVRNGVPVMLPTNPIELVTSSVLSTQSKFQILLEPFLWKKKSSKVSDASAEESVSEFFQRHFGQEVVDYLIDPFVGGTSAADPDSLSMKHSFPDLWNVEKSFGSIIVGAIRTKFAAKGGKSRDTKSSPGTKKGSRGSFSFKGGMQILPDTLCKSLSHDEINLDSKVLSLSYNSGSRQENWSLSCVSHNETQRQNPHYDAVIMTAPLCNVKEMKVMKGGQPFQLNFLPEINYMPLSVLITTFTKEKVKRPLEGFGVLIPSKEQKHGFKTLGTLFSSMMFPDRSPSDVHLYTTFIGGSRNQELAKASTDELKQVVTSDLQRLLGVEGEPVSVNHYYWRKAFPLYDSSYDSVMEAIDKMENDLPGFFYAGNHRGGLSVGKSIASGCKAADLVISYLESCSNDKKPNDSL</sequence>
<comment type="function">
    <text evidence="1">Catalyzes the 6-electron oxidation of protoporphyrinogen-IX to form protoporphyrin-IX.</text>
</comment>
<comment type="catalytic activity">
    <reaction>
        <text>protoporphyrinogen IX + 3 O2 = protoporphyrin IX + 3 H2O2</text>
        <dbReference type="Rhea" id="RHEA:25576"/>
        <dbReference type="ChEBI" id="CHEBI:15379"/>
        <dbReference type="ChEBI" id="CHEBI:16240"/>
        <dbReference type="ChEBI" id="CHEBI:57306"/>
        <dbReference type="ChEBI" id="CHEBI:57307"/>
        <dbReference type="EC" id="1.3.3.4"/>
    </reaction>
</comment>
<comment type="cofactor">
    <cofactor evidence="1">
        <name>FAD</name>
        <dbReference type="ChEBI" id="CHEBI:57692"/>
    </cofactor>
    <text evidence="1">Binds 1 FAD per subunit.</text>
</comment>
<comment type="pathway">
    <text>Porphyrin-containing compound metabolism; protoporphyrin-IX biosynthesis; protoporphyrin-IX from protoporphyrinogen-IX: step 1/1.</text>
</comment>
<comment type="pathway">
    <text>Porphyrin-containing compound metabolism; chlorophyll biosynthesis.</text>
</comment>
<comment type="subcellular location">
    <subcellularLocation>
        <location>Plastid</location>
        <location>Chloroplast</location>
    </subcellularLocation>
    <subcellularLocation>
        <location evidence="5">Mitochondrion</location>
    </subcellularLocation>
</comment>
<comment type="alternative products">
    <event type="alternative splicing"/>
    <isoform>
        <id>Q8S9J1-1</id>
        <name>1</name>
        <sequence type="displayed"/>
    </isoform>
    <isoform>
        <id>Q8S9J1-2</id>
        <name>2</name>
        <sequence type="described" ref="VSP_046550"/>
    </isoform>
</comment>
<comment type="disruption phenotype">
    <text evidence="4">Embryo development arrested at one-cell zygotic stage.</text>
</comment>
<comment type="similarity">
    <text evidence="6">Belongs to the protoporphyrinogen/coproporphyrinogen oxidase family. Protoporphyrinogen oxidase subfamily.</text>
</comment>
<comment type="sequence caution" evidence="6">
    <conflict type="erroneous gene model prediction">
        <sequence resource="EMBL-CDS" id="BAB08301"/>
    </conflict>
</comment>
<comment type="sequence caution" evidence="6">
    <conflict type="erroneous gene model prediction">
        <sequence resource="EMBL-CDS" id="CAB87761"/>
    </conflict>
</comment>
<organism>
    <name type="scientific">Arabidopsis thaliana</name>
    <name type="common">Mouse-ear cress</name>
    <dbReference type="NCBI Taxonomy" id="3702"/>
    <lineage>
        <taxon>Eukaryota</taxon>
        <taxon>Viridiplantae</taxon>
        <taxon>Streptophyta</taxon>
        <taxon>Embryophyta</taxon>
        <taxon>Tracheophyta</taxon>
        <taxon>Spermatophyta</taxon>
        <taxon>Magnoliopsida</taxon>
        <taxon>eudicotyledons</taxon>
        <taxon>Gunneridae</taxon>
        <taxon>Pentapetalae</taxon>
        <taxon>rosids</taxon>
        <taxon>malvids</taxon>
        <taxon>Brassicales</taxon>
        <taxon>Brassicaceae</taxon>
        <taxon>Camelineae</taxon>
        <taxon>Arabidopsis</taxon>
    </lineage>
</organism>